<reference key="1">
    <citation type="journal article" date="1996" name="Plant Mol. Biol.">
        <title>The rpl5-rps14-cob gene arrangement in Solanum tuberosum: rps14 is a transcribed and unedited pseudogene.</title>
        <authorList>
            <person name="Quinones V."/>
            <person name="Zanlungo S."/>
            <person name="Moenne A."/>
            <person name="Gomez I."/>
            <person name="Holuigue L."/>
            <person name="Litvak S."/>
            <person name="Jordana X."/>
        </authorList>
    </citation>
    <scope>NUCLEOTIDE SEQUENCE [GENOMIC DNA]</scope>
    <scope>RNA EDITING</scope>
    <source>
        <strain>cv. Bintje</strain>
        <tissue>Tuber</tissue>
    </source>
</reference>
<gene>
    <name type="primary">RPL5</name>
</gene>
<accession>P51409</accession>
<protein>
    <recommendedName>
        <fullName evidence="2">Large ribosomal subunit protein uL5m</fullName>
    </recommendedName>
    <alternativeName>
        <fullName>60S ribosomal protein L5, mitochondrial</fullName>
    </alternativeName>
</protein>
<name>RM05_SOLTU</name>
<comment type="subcellular location">
    <subcellularLocation>
        <location>Mitochondrion</location>
    </subcellularLocation>
</comment>
<comment type="RNA editing">
    <location>
        <position position="16" evidence="1"/>
    </location>
    <location>
        <position position="20" evidence="1"/>
    </location>
    <location>
        <position position="24" evidence="1"/>
    </location>
    <location>
        <position position="26" evidence="1"/>
    </location>
    <location>
        <position position="35" evidence="1"/>
    </location>
    <location>
        <position position="58" evidence="1"/>
    </location>
    <location>
        <position position="172" evidence="1"/>
    </location>
    <location>
        <position position="173" evidence="1"/>
    </location>
</comment>
<comment type="similarity">
    <text evidence="2">Belongs to the universal ribosomal protein uL5 family.</text>
</comment>
<dbReference type="EMBL" id="X86453">
    <property type="protein sequence ID" value="CAA60171.1"/>
    <property type="status" value="ALT_SEQ"/>
    <property type="molecule type" value="Genomic_DNA"/>
</dbReference>
<dbReference type="PIR" id="S71575">
    <property type="entry name" value="S71575"/>
</dbReference>
<dbReference type="SMR" id="P51409"/>
<dbReference type="FunCoup" id="P51409">
    <property type="interactions" value="67"/>
</dbReference>
<dbReference type="STRING" id="4113.P51409"/>
<dbReference type="PaxDb" id="4113-PGSC0003DMT400083814"/>
<dbReference type="eggNOG" id="ENOG502QT6Q">
    <property type="taxonomic scope" value="Eukaryota"/>
</dbReference>
<dbReference type="InParanoid" id="P51409"/>
<dbReference type="Proteomes" id="UP000011115">
    <property type="component" value="Unassembled WGS sequence"/>
</dbReference>
<dbReference type="ExpressionAtlas" id="P51409">
    <property type="expression patterns" value="baseline"/>
</dbReference>
<dbReference type="GO" id="GO:0022625">
    <property type="term" value="C:cytosolic large ribosomal subunit"/>
    <property type="evidence" value="ECO:0000318"/>
    <property type="project" value="GO_Central"/>
</dbReference>
<dbReference type="GO" id="GO:0005739">
    <property type="term" value="C:mitochondrion"/>
    <property type="evidence" value="ECO:0007669"/>
    <property type="project" value="UniProtKB-SubCell"/>
</dbReference>
<dbReference type="GO" id="GO:0003723">
    <property type="term" value="F:RNA binding"/>
    <property type="evidence" value="ECO:0000318"/>
    <property type="project" value="GO_Central"/>
</dbReference>
<dbReference type="GO" id="GO:0003735">
    <property type="term" value="F:structural constituent of ribosome"/>
    <property type="evidence" value="ECO:0000318"/>
    <property type="project" value="GO_Central"/>
</dbReference>
<dbReference type="GO" id="GO:0006412">
    <property type="term" value="P:translation"/>
    <property type="evidence" value="ECO:0000318"/>
    <property type="project" value="GO_Central"/>
</dbReference>
<dbReference type="FunFam" id="3.30.1440.10:FF:000003">
    <property type="entry name" value="Ribosomal protein L5"/>
    <property type="match status" value="1"/>
</dbReference>
<dbReference type="Gene3D" id="3.30.1440.10">
    <property type="match status" value="1"/>
</dbReference>
<dbReference type="InterPro" id="IPR002132">
    <property type="entry name" value="Ribosomal_uL5"/>
</dbReference>
<dbReference type="InterPro" id="IPR022803">
    <property type="entry name" value="Ribosomal_uL5_dom_sf"/>
</dbReference>
<dbReference type="PANTHER" id="PTHR11994">
    <property type="entry name" value="60S RIBOSOMAL PROTEIN L11-RELATED"/>
    <property type="match status" value="1"/>
</dbReference>
<dbReference type="PIRSF" id="PIRSF002161">
    <property type="entry name" value="Ribosomal_L5"/>
    <property type="match status" value="1"/>
</dbReference>
<dbReference type="SUPFAM" id="SSF55282">
    <property type="entry name" value="RL5-like"/>
    <property type="match status" value="1"/>
</dbReference>
<proteinExistence type="evidence at transcript level"/>
<evidence type="ECO:0000269" key="1">
    <source>
    </source>
</evidence>
<evidence type="ECO:0000305" key="2"/>
<geneLocation type="mitochondrion"/>
<feature type="chain" id="PRO_0000125078" description="Large ribosomal subunit protein uL5m">
    <location>
        <begin position="1"/>
        <end position="186"/>
    </location>
</feature>
<organism>
    <name type="scientific">Solanum tuberosum</name>
    <name type="common">Potato</name>
    <dbReference type="NCBI Taxonomy" id="4113"/>
    <lineage>
        <taxon>Eukaryota</taxon>
        <taxon>Viridiplantae</taxon>
        <taxon>Streptophyta</taxon>
        <taxon>Embryophyta</taxon>
        <taxon>Tracheophyta</taxon>
        <taxon>Spermatophyta</taxon>
        <taxon>Magnoliopsida</taxon>
        <taxon>eudicotyledons</taxon>
        <taxon>Gunneridae</taxon>
        <taxon>Pentapetalae</taxon>
        <taxon>asterids</taxon>
        <taxon>lamiids</taxon>
        <taxon>Solanales</taxon>
        <taxon>Solanaceae</taxon>
        <taxon>Solanoideae</taxon>
        <taxon>Solaneae</taxon>
        <taxon>Solanum</taxon>
    </lineage>
</organism>
<sequence length="186" mass="21242">MDQLMFPLYFHYEDVLRQDLLLKLNYANVMEVPGLCKIIVVPKTAPSIKNGKLAMEISCGQKLKQRASTGKSFRSNPFLGSNKDKKGYVSDLARQSTLRGHGMSHFLVRISTVMSLLDSPLEIRERSIQFSMETEFCEFSPELEDHFEIFEHIRGFNVTIVTSANTQDETLLLWSGFLQKDEGETQ</sequence>
<keyword id="KW-0496">Mitochondrion</keyword>
<keyword id="KW-1185">Reference proteome</keyword>
<keyword id="KW-0687">Ribonucleoprotein</keyword>
<keyword id="KW-0689">Ribosomal protein</keyword>
<keyword id="KW-0691">RNA editing</keyword>